<keyword id="KW-0687">Ribonucleoprotein</keyword>
<keyword id="KW-0689">Ribosomal protein</keyword>
<keyword id="KW-0694">RNA-binding</keyword>
<keyword id="KW-0699">rRNA-binding</keyword>
<proteinExistence type="inferred from homology"/>
<organism>
    <name type="scientific">Ruthia magnifica subsp. Calyptogena magnifica</name>
    <dbReference type="NCBI Taxonomy" id="413404"/>
    <lineage>
        <taxon>Bacteria</taxon>
        <taxon>Pseudomonadati</taxon>
        <taxon>Pseudomonadota</taxon>
        <taxon>Gammaproteobacteria</taxon>
        <taxon>Candidatus Pseudothioglobaceae</taxon>
        <taxon>Candidatus Ruthturnera</taxon>
    </lineage>
</organism>
<comment type="function">
    <text evidence="1">One of the primary rRNA binding proteins, it binds directly to 16S rRNA central domain where it helps coordinate assembly of the platform of the 30S subunit.</text>
</comment>
<comment type="subunit">
    <text evidence="1">Part of the 30S ribosomal subunit. Contacts proteins S5 and S12.</text>
</comment>
<comment type="similarity">
    <text evidence="1">Belongs to the universal ribosomal protein uS8 family.</text>
</comment>
<reference key="1">
    <citation type="journal article" date="2007" name="Science">
        <title>The Calyptogena magnifica chemoautotrophic symbiont genome.</title>
        <authorList>
            <person name="Newton I.L.G."/>
            <person name="Woyke T."/>
            <person name="Auchtung T.A."/>
            <person name="Dilly G.F."/>
            <person name="Dutton R.J."/>
            <person name="Fisher M.C."/>
            <person name="Fontanez K.M."/>
            <person name="Lau E."/>
            <person name="Stewart F.J."/>
            <person name="Richardson P.M."/>
            <person name="Barry K.W."/>
            <person name="Saunders E."/>
            <person name="Detter J.C."/>
            <person name="Wu D."/>
            <person name="Eisen J.A."/>
            <person name="Cavanaugh C.M."/>
        </authorList>
    </citation>
    <scope>NUCLEOTIDE SEQUENCE [LARGE SCALE GENOMIC DNA]</scope>
</reference>
<name>RS8_RUTMC</name>
<sequence length="131" mass="14298">MSMSDPIADMLTRIRNAQMVEKKEVNVPASNLKSAIASVMQEEGYIKSFSVDGIAASKTLNIKLKYYDNKSVIEKLKRISKPSLRVYVSSSQMPSVMNGLGIVIVSTPKGVMTGQTAYEQNIGGEVLCSVY</sequence>
<gene>
    <name evidence="1" type="primary">rpsH</name>
    <name type="ordered locus">Rmag_0179</name>
</gene>
<dbReference type="EMBL" id="CP000488">
    <property type="protein sequence ID" value="ABL01971.1"/>
    <property type="molecule type" value="Genomic_DNA"/>
</dbReference>
<dbReference type="RefSeq" id="WP_011737597.1">
    <property type="nucleotide sequence ID" value="NC_008610.1"/>
</dbReference>
<dbReference type="SMR" id="A1AVL4"/>
<dbReference type="STRING" id="413404.Rmag_0179"/>
<dbReference type="KEGG" id="rma:Rmag_0179"/>
<dbReference type="eggNOG" id="COG0096">
    <property type="taxonomic scope" value="Bacteria"/>
</dbReference>
<dbReference type="HOGENOM" id="CLU_098428_0_0_6"/>
<dbReference type="OrthoDB" id="9802617at2"/>
<dbReference type="Proteomes" id="UP000002587">
    <property type="component" value="Chromosome"/>
</dbReference>
<dbReference type="GO" id="GO:1990904">
    <property type="term" value="C:ribonucleoprotein complex"/>
    <property type="evidence" value="ECO:0007669"/>
    <property type="project" value="UniProtKB-KW"/>
</dbReference>
<dbReference type="GO" id="GO:0005840">
    <property type="term" value="C:ribosome"/>
    <property type="evidence" value="ECO:0007669"/>
    <property type="project" value="UniProtKB-KW"/>
</dbReference>
<dbReference type="GO" id="GO:0019843">
    <property type="term" value="F:rRNA binding"/>
    <property type="evidence" value="ECO:0007669"/>
    <property type="project" value="UniProtKB-UniRule"/>
</dbReference>
<dbReference type="GO" id="GO:0003735">
    <property type="term" value="F:structural constituent of ribosome"/>
    <property type="evidence" value="ECO:0007669"/>
    <property type="project" value="InterPro"/>
</dbReference>
<dbReference type="GO" id="GO:0006412">
    <property type="term" value="P:translation"/>
    <property type="evidence" value="ECO:0007669"/>
    <property type="project" value="UniProtKB-UniRule"/>
</dbReference>
<dbReference type="FunFam" id="3.30.1370.30:FF:000002">
    <property type="entry name" value="30S ribosomal protein S8"/>
    <property type="match status" value="1"/>
</dbReference>
<dbReference type="FunFam" id="3.30.1490.10:FF:000001">
    <property type="entry name" value="30S ribosomal protein S8"/>
    <property type="match status" value="1"/>
</dbReference>
<dbReference type="Gene3D" id="3.30.1370.30">
    <property type="match status" value="1"/>
</dbReference>
<dbReference type="Gene3D" id="3.30.1490.10">
    <property type="match status" value="1"/>
</dbReference>
<dbReference type="HAMAP" id="MF_01302_B">
    <property type="entry name" value="Ribosomal_uS8_B"/>
    <property type="match status" value="1"/>
</dbReference>
<dbReference type="InterPro" id="IPR000630">
    <property type="entry name" value="Ribosomal_uS8"/>
</dbReference>
<dbReference type="InterPro" id="IPR047863">
    <property type="entry name" value="Ribosomal_uS8_CS"/>
</dbReference>
<dbReference type="InterPro" id="IPR035987">
    <property type="entry name" value="Ribosomal_uS8_sf"/>
</dbReference>
<dbReference type="NCBIfam" id="NF001109">
    <property type="entry name" value="PRK00136.1"/>
    <property type="match status" value="1"/>
</dbReference>
<dbReference type="PANTHER" id="PTHR11758">
    <property type="entry name" value="40S RIBOSOMAL PROTEIN S15A"/>
    <property type="match status" value="1"/>
</dbReference>
<dbReference type="Pfam" id="PF00410">
    <property type="entry name" value="Ribosomal_S8"/>
    <property type="match status" value="1"/>
</dbReference>
<dbReference type="SUPFAM" id="SSF56047">
    <property type="entry name" value="Ribosomal protein S8"/>
    <property type="match status" value="1"/>
</dbReference>
<dbReference type="PROSITE" id="PS00053">
    <property type="entry name" value="RIBOSOMAL_S8"/>
    <property type="match status" value="1"/>
</dbReference>
<evidence type="ECO:0000255" key="1">
    <source>
        <dbReference type="HAMAP-Rule" id="MF_01302"/>
    </source>
</evidence>
<evidence type="ECO:0000305" key="2"/>
<accession>A1AVL4</accession>
<feature type="chain" id="PRO_0000290921" description="Small ribosomal subunit protein uS8">
    <location>
        <begin position="1"/>
        <end position="131"/>
    </location>
</feature>
<protein>
    <recommendedName>
        <fullName evidence="1">Small ribosomal subunit protein uS8</fullName>
    </recommendedName>
    <alternativeName>
        <fullName evidence="2">30S ribosomal protein S8</fullName>
    </alternativeName>
</protein>